<keyword id="KW-0997">Cell inner membrane</keyword>
<keyword id="KW-1003">Cell membrane</keyword>
<keyword id="KW-0407">Ion channel</keyword>
<keyword id="KW-0406">Ion transport</keyword>
<keyword id="KW-0472">Membrane</keyword>
<keyword id="KW-0479">Metal-binding</keyword>
<keyword id="KW-0915">Sodium</keyword>
<keyword id="KW-0812">Transmembrane</keyword>
<keyword id="KW-1133">Transmembrane helix</keyword>
<keyword id="KW-0813">Transport</keyword>
<protein>
    <recommendedName>
        <fullName evidence="1">Fluoride-specific ion channel FluC</fullName>
    </recommendedName>
</protein>
<dbReference type="EMBL" id="AM236080">
    <property type="protein sequence ID" value="CAK08056.1"/>
    <property type="molecule type" value="Genomic_DNA"/>
</dbReference>
<dbReference type="RefSeq" id="WP_011652122.1">
    <property type="nucleotide sequence ID" value="NC_008380.1"/>
</dbReference>
<dbReference type="SMR" id="Q1MG67"/>
<dbReference type="EnsemblBacteria" id="CAK08056">
    <property type="protein sequence ID" value="CAK08056"/>
    <property type="gene ID" value="RL2568"/>
</dbReference>
<dbReference type="KEGG" id="rle:RL2568"/>
<dbReference type="eggNOG" id="COG0239">
    <property type="taxonomic scope" value="Bacteria"/>
</dbReference>
<dbReference type="HOGENOM" id="CLU_114342_2_3_5"/>
<dbReference type="Proteomes" id="UP000006575">
    <property type="component" value="Chromosome"/>
</dbReference>
<dbReference type="GO" id="GO:0005886">
    <property type="term" value="C:plasma membrane"/>
    <property type="evidence" value="ECO:0007669"/>
    <property type="project" value="UniProtKB-SubCell"/>
</dbReference>
<dbReference type="GO" id="GO:0062054">
    <property type="term" value="F:fluoride channel activity"/>
    <property type="evidence" value="ECO:0007669"/>
    <property type="project" value="UniProtKB-UniRule"/>
</dbReference>
<dbReference type="GO" id="GO:0046872">
    <property type="term" value="F:metal ion binding"/>
    <property type="evidence" value="ECO:0007669"/>
    <property type="project" value="UniProtKB-KW"/>
</dbReference>
<dbReference type="GO" id="GO:0140114">
    <property type="term" value="P:cellular detoxification of fluoride"/>
    <property type="evidence" value="ECO:0007669"/>
    <property type="project" value="UniProtKB-UniRule"/>
</dbReference>
<dbReference type="HAMAP" id="MF_00454">
    <property type="entry name" value="FluC"/>
    <property type="match status" value="1"/>
</dbReference>
<dbReference type="InterPro" id="IPR003691">
    <property type="entry name" value="FluC"/>
</dbReference>
<dbReference type="NCBIfam" id="TIGR00494">
    <property type="entry name" value="crcB"/>
    <property type="match status" value="1"/>
</dbReference>
<dbReference type="NCBIfam" id="NF010791">
    <property type="entry name" value="PRK14195.1"/>
    <property type="match status" value="1"/>
</dbReference>
<dbReference type="PANTHER" id="PTHR28259">
    <property type="entry name" value="FLUORIDE EXPORT PROTEIN 1-RELATED"/>
    <property type="match status" value="1"/>
</dbReference>
<dbReference type="PANTHER" id="PTHR28259:SF1">
    <property type="entry name" value="FLUORIDE EXPORT PROTEIN 1-RELATED"/>
    <property type="match status" value="1"/>
</dbReference>
<dbReference type="Pfam" id="PF02537">
    <property type="entry name" value="CRCB"/>
    <property type="match status" value="1"/>
</dbReference>
<proteinExistence type="inferred from homology"/>
<organism>
    <name type="scientific">Rhizobium johnstonii (strain DSM 114642 / LMG 32736 / 3841)</name>
    <name type="common">Rhizobium leguminosarum bv. viciae</name>
    <dbReference type="NCBI Taxonomy" id="216596"/>
    <lineage>
        <taxon>Bacteria</taxon>
        <taxon>Pseudomonadati</taxon>
        <taxon>Pseudomonadota</taxon>
        <taxon>Alphaproteobacteria</taxon>
        <taxon>Hyphomicrobiales</taxon>
        <taxon>Rhizobiaceae</taxon>
        <taxon>Rhizobium/Agrobacterium group</taxon>
        <taxon>Rhizobium</taxon>
        <taxon>Rhizobium johnstonii</taxon>
    </lineage>
</organism>
<gene>
    <name evidence="1" type="primary">fluC</name>
    <name evidence="1" type="synonym">crcB</name>
    <name type="ordered locus">RL2568</name>
</gene>
<evidence type="ECO:0000255" key="1">
    <source>
        <dbReference type="HAMAP-Rule" id="MF_00454"/>
    </source>
</evidence>
<name>FLUC_RHIJ3</name>
<accession>Q1MG67</accession>
<feature type="chain" id="PRO_0000252923" description="Fluoride-specific ion channel FluC">
    <location>
        <begin position="1"/>
        <end position="125"/>
    </location>
</feature>
<feature type="transmembrane region" description="Helical" evidence="1">
    <location>
        <begin position="1"/>
        <end position="21"/>
    </location>
</feature>
<feature type="transmembrane region" description="Helical" evidence="1">
    <location>
        <begin position="32"/>
        <end position="52"/>
    </location>
</feature>
<feature type="transmembrane region" description="Helical" evidence="1">
    <location>
        <begin position="68"/>
        <end position="88"/>
    </location>
</feature>
<feature type="transmembrane region" description="Helical" evidence="1">
    <location>
        <begin position="101"/>
        <end position="121"/>
    </location>
</feature>
<feature type="binding site" evidence="1">
    <location>
        <position position="75"/>
    </location>
    <ligand>
        <name>Na(+)</name>
        <dbReference type="ChEBI" id="CHEBI:29101"/>
        <note>structural</note>
    </ligand>
</feature>
<feature type="binding site" evidence="1">
    <location>
        <position position="78"/>
    </location>
    <ligand>
        <name>Na(+)</name>
        <dbReference type="ChEBI" id="CHEBI:29101"/>
        <note>structural</note>
    </ligand>
</feature>
<comment type="function">
    <text evidence="1">Fluoride-specific ion channel. Important for reducing fluoride concentration in the cell, thus reducing its toxicity.</text>
</comment>
<comment type="catalytic activity">
    <reaction evidence="1">
        <text>fluoride(in) = fluoride(out)</text>
        <dbReference type="Rhea" id="RHEA:76159"/>
        <dbReference type="ChEBI" id="CHEBI:17051"/>
    </reaction>
    <physiologicalReaction direction="left-to-right" evidence="1">
        <dbReference type="Rhea" id="RHEA:76160"/>
    </physiologicalReaction>
</comment>
<comment type="activity regulation">
    <text evidence="1">Na(+) is not transported, but it plays an essential structural role and its presence is essential for fluoride channel function.</text>
</comment>
<comment type="subcellular location">
    <subcellularLocation>
        <location evidence="1">Cell inner membrane</location>
        <topology evidence="1">Multi-pass membrane protein</topology>
    </subcellularLocation>
</comment>
<comment type="similarity">
    <text evidence="1">Belongs to the fluoride channel Fluc/FEX (TC 1.A.43) family.</text>
</comment>
<reference key="1">
    <citation type="journal article" date="2006" name="Genome Biol.">
        <title>The genome of Rhizobium leguminosarum has recognizable core and accessory components.</title>
        <authorList>
            <person name="Young J.P.W."/>
            <person name="Crossman L.C."/>
            <person name="Johnston A.W.B."/>
            <person name="Thomson N.R."/>
            <person name="Ghazoui Z.F."/>
            <person name="Hull K.H."/>
            <person name="Wexler M."/>
            <person name="Curson A.R.J."/>
            <person name="Todd J.D."/>
            <person name="Poole P.S."/>
            <person name="Mauchline T.H."/>
            <person name="East A.K."/>
            <person name="Quail M.A."/>
            <person name="Churcher C."/>
            <person name="Arrowsmith C."/>
            <person name="Cherevach I."/>
            <person name="Chillingworth T."/>
            <person name="Clarke K."/>
            <person name="Cronin A."/>
            <person name="Davis P."/>
            <person name="Fraser A."/>
            <person name="Hance Z."/>
            <person name="Hauser H."/>
            <person name="Jagels K."/>
            <person name="Moule S."/>
            <person name="Mungall K."/>
            <person name="Norbertczak H."/>
            <person name="Rabbinowitsch E."/>
            <person name="Sanders M."/>
            <person name="Simmonds M."/>
            <person name="Whitehead S."/>
            <person name="Parkhill J."/>
        </authorList>
    </citation>
    <scope>NUCLEOTIDE SEQUENCE [LARGE SCALE GENOMIC DNA]</scope>
    <source>
        <strain>DSM 114642 / LMG 32736 / 3841</strain>
    </source>
</reference>
<sequence>MIQAILVAFGGAIGSVLRYYVGQWALRLMGSAFPWGTLAVNVVGCFVIGVFAELIARKFDASVELRLLLITGFLGGFTTFSAFSLDAISLFERGEAVAGGIYIAASVGLSMAAVIAGLAVMRALA</sequence>